<feature type="chain" id="PRO_0000060448" description="tRNA (guanine-N(1)-)-methyltransferase">
    <location>
        <begin position="1"/>
        <end position="255"/>
    </location>
</feature>
<feature type="binding site" evidence="1">
    <location>
        <position position="113"/>
    </location>
    <ligand>
        <name>S-adenosyl-L-methionine</name>
        <dbReference type="ChEBI" id="CHEBI:59789"/>
    </ligand>
</feature>
<feature type="binding site" evidence="1">
    <location>
        <begin position="133"/>
        <end position="138"/>
    </location>
    <ligand>
        <name>S-adenosyl-L-methionine</name>
        <dbReference type="ChEBI" id="CHEBI:59789"/>
    </ligand>
</feature>
<reference key="1">
    <citation type="journal article" date="2004" name="Nat. Genet.">
        <title>Comparison of genome degradation in Paratyphi A and Typhi, human-restricted serovars of Salmonella enterica that cause typhoid.</title>
        <authorList>
            <person name="McClelland M."/>
            <person name="Sanderson K.E."/>
            <person name="Clifton S.W."/>
            <person name="Latreille P."/>
            <person name="Porwollik S."/>
            <person name="Sabo A."/>
            <person name="Meyer R."/>
            <person name="Bieri T."/>
            <person name="Ozersky P."/>
            <person name="McLellan M."/>
            <person name="Harkins C.R."/>
            <person name="Wang C."/>
            <person name="Nguyen C."/>
            <person name="Berghoff A."/>
            <person name="Elliott G."/>
            <person name="Kohlberg S."/>
            <person name="Strong C."/>
            <person name="Du F."/>
            <person name="Carter J."/>
            <person name="Kremizki C."/>
            <person name="Layman D."/>
            <person name="Leonard S."/>
            <person name="Sun H."/>
            <person name="Fulton L."/>
            <person name="Nash W."/>
            <person name="Miner T."/>
            <person name="Minx P."/>
            <person name="Delehaunty K."/>
            <person name="Fronick C."/>
            <person name="Magrini V."/>
            <person name="Nhan M."/>
            <person name="Warren W."/>
            <person name="Florea L."/>
            <person name="Spieth J."/>
            <person name="Wilson R.K."/>
        </authorList>
    </citation>
    <scope>NUCLEOTIDE SEQUENCE [LARGE SCALE GENOMIC DNA]</scope>
    <source>
        <strain>ATCC 9150 / SARB42</strain>
    </source>
</reference>
<organism>
    <name type="scientific">Salmonella paratyphi A (strain ATCC 9150 / SARB42)</name>
    <dbReference type="NCBI Taxonomy" id="295319"/>
    <lineage>
        <taxon>Bacteria</taxon>
        <taxon>Pseudomonadati</taxon>
        <taxon>Pseudomonadota</taxon>
        <taxon>Gammaproteobacteria</taxon>
        <taxon>Enterobacterales</taxon>
        <taxon>Enterobacteriaceae</taxon>
        <taxon>Salmonella</taxon>
    </lineage>
</organism>
<proteinExistence type="inferred from homology"/>
<accession>Q5PFF8</accession>
<protein>
    <recommendedName>
        <fullName evidence="1">tRNA (guanine-N(1)-)-methyltransferase</fullName>
        <ecNumber evidence="1">2.1.1.228</ecNumber>
    </recommendedName>
    <alternativeName>
        <fullName evidence="1">M1G-methyltransferase</fullName>
    </alternativeName>
    <alternativeName>
        <fullName evidence="1">tRNA [GM37] methyltransferase</fullName>
    </alternativeName>
</protein>
<sequence>MFIGIVSLFPEMFRAITDYGVTGRAVKKGLLNIQSWSPRDFAHDRHRTVDDRPYGGGPGMLMMVQPLRDAIHAAKAAAGEGAKVIYLSPQGRKLDQAGVSELATNQKLILVCGRYEGVDERVIQAEIDEEWSIGDYVLSGGELPAMTLIDSVARFIPGVLGHEASAIEDSFADGLLDCPHYTRPEVLEGMEVPPVLLSGNHAEIRRWRLKQSLGRTWLRRPELLENLALTEEQARLLAEFKTEHAQQQHKHDGMA</sequence>
<evidence type="ECO:0000255" key="1">
    <source>
        <dbReference type="HAMAP-Rule" id="MF_00605"/>
    </source>
</evidence>
<name>TRMD_SALPA</name>
<comment type="function">
    <text evidence="1">Specifically methylates guanosine-37 in various tRNAs.</text>
</comment>
<comment type="catalytic activity">
    <reaction evidence="1">
        <text>guanosine(37) in tRNA + S-adenosyl-L-methionine = N(1)-methylguanosine(37) in tRNA + S-adenosyl-L-homocysteine + H(+)</text>
        <dbReference type="Rhea" id="RHEA:36899"/>
        <dbReference type="Rhea" id="RHEA-COMP:10145"/>
        <dbReference type="Rhea" id="RHEA-COMP:10147"/>
        <dbReference type="ChEBI" id="CHEBI:15378"/>
        <dbReference type="ChEBI" id="CHEBI:57856"/>
        <dbReference type="ChEBI" id="CHEBI:59789"/>
        <dbReference type="ChEBI" id="CHEBI:73542"/>
        <dbReference type="ChEBI" id="CHEBI:74269"/>
        <dbReference type="EC" id="2.1.1.228"/>
    </reaction>
</comment>
<comment type="subunit">
    <text evidence="1">Homodimer.</text>
</comment>
<comment type="subcellular location">
    <subcellularLocation>
        <location evidence="1">Cytoplasm</location>
    </subcellularLocation>
</comment>
<comment type="similarity">
    <text evidence="1">Belongs to the RNA methyltransferase TrmD family.</text>
</comment>
<keyword id="KW-0963">Cytoplasm</keyword>
<keyword id="KW-0489">Methyltransferase</keyword>
<keyword id="KW-0949">S-adenosyl-L-methionine</keyword>
<keyword id="KW-0808">Transferase</keyword>
<keyword id="KW-0819">tRNA processing</keyword>
<gene>
    <name evidence="1" type="primary">trmD</name>
    <name type="ordered locus">SPA2533</name>
</gene>
<dbReference type="EC" id="2.1.1.228" evidence="1"/>
<dbReference type="EMBL" id="CP000026">
    <property type="protein sequence ID" value="AAV78402.1"/>
    <property type="molecule type" value="Genomic_DNA"/>
</dbReference>
<dbReference type="RefSeq" id="WP_000469802.1">
    <property type="nucleotide sequence ID" value="NC_006511.1"/>
</dbReference>
<dbReference type="SMR" id="Q5PFF8"/>
<dbReference type="KEGG" id="spt:SPA2533"/>
<dbReference type="HOGENOM" id="CLU_047363_0_1_6"/>
<dbReference type="Proteomes" id="UP000008185">
    <property type="component" value="Chromosome"/>
</dbReference>
<dbReference type="GO" id="GO:0005829">
    <property type="term" value="C:cytosol"/>
    <property type="evidence" value="ECO:0007669"/>
    <property type="project" value="TreeGrafter"/>
</dbReference>
<dbReference type="GO" id="GO:0052906">
    <property type="term" value="F:tRNA (guanine(37)-N1)-methyltransferase activity"/>
    <property type="evidence" value="ECO:0007669"/>
    <property type="project" value="UniProtKB-UniRule"/>
</dbReference>
<dbReference type="GO" id="GO:0002939">
    <property type="term" value="P:tRNA N1-guanine methylation"/>
    <property type="evidence" value="ECO:0007669"/>
    <property type="project" value="TreeGrafter"/>
</dbReference>
<dbReference type="CDD" id="cd18080">
    <property type="entry name" value="TrmD-like"/>
    <property type="match status" value="1"/>
</dbReference>
<dbReference type="FunFam" id="1.10.1270.20:FF:000001">
    <property type="entry name" value="tRNA (guanine-N(1)-)-methyltransferase"/>
    <property type="match status" value="1"/>
</dbReference>
<dbReference type="FunFam" id="3.40.1280.10:FF:000001">
    <property type="entry name" value="tRNA (guanine-N(1)-)-methyltransferase"/>
    <property type="match status" value="1"/>
</dbReference>
<dbReference type="Gene3D" id="3.40.1280.10">
    <property type="match status" value="1"/>
</dbReference>
<dbReference type="Gene3D" id="1.10.1270.20">
    <property type="entry name" value="tRNA(m1g37)methyltransferase, domain 2"/>
    <property type="match status" value="1"/>
</dbReference>
<dbReference type="HAMAP" id="MF_00605">
    <property type="entry name" value="TrmD"/>
    <property type="match status" value="1"/>
</dbReference>
<dbReference type="InterPro" id="IPR029028">
    <property type="entry name" value="Alpha/beta_knot_MTases"/>
</dbReference>
<dbReference type="InterPro" id="IPR023148">
    <property type="entry name" value="tRNA_m1G_MeTrfase_C_sf"/>
</dbReference>
<dbReference type="InterPro" id="IPR002649">
    <property type="entry name" value="tRNA_m1G_MeTrfase_TrmD"/>
</dbReference>
<dbReference type="InterPro" id="IPR029026">
    <property type="entry name" value="tRNA_m1G_MTases_N"/>
</dbReference>
<dbReference type="InterPro" id="IPR016009">
    <property type="entry name" value="tRNA_MeTrfase_TRMD/TRM10"/>
</dbReference>
<dbReference type="NCBIfam" id="NF000648">
    <property type="entry name" value="PRK00026.1"/>
    <property type="match status" value="1"/>
</dbReference>
<dbReference type="NCBIfam" id="TIGR00088">
    <property type="entry name" value="trmD"/>
    <property type="match status" value="1"/>
</dbReference>
<dbReference type="PANTHER" id="PTHR46417">
    <property type="entry name" value="TRNA (GUANINE-N(1)-)-METHYLTRANSFERASE"/>
    <property type="match status" value="1"/>
</dbReference>
<dbReference type="PANTHER" id="PTHR46417:SF1">
    <property type="entry name" value="TRNA (GUANINE-N(1)-)-METHYLTRANSFERASE"/>
    <property type="match status" value="1"/>
</dbReference>
<dbReference type="Pfam" id="PF01746">
    <property type="entry name" value="tRNA_m1G_MT"/>
    <property type="match status" value="1"/>
</dbReference>
<dbReference type="PIRSF" id="PIRSF000386">
    <property type="entry name" value="tRNA_mtase"/>
    <property type="match status" value="1"/>
</dbReference>
<dbReference type="SUPFAM" id="SSF75217">
    <property type="entry name" value="alpha/beta knot"/>
    <property type="match status" value="1"/>
</dbReference>